<keyword id="KW-0020">Allergen</keyword>
<keyword id="KW-0963">Cytoplasm</keyword>
<keyword id="KW-0903">Direct protein sequencing</keyword>
<keyword id="KW-0325">Glycoprotein</keyword>
<keyword id="KW-0964">Secreted</keyword>
<feature type="chain" id="PRO_0000455633" description="Antigenic protein SchS34">
    <location>
        <begin position="1" status="less than"/>
        <end position="221"/>
    </location>
</feature>
<feature type="glycosylation site" description="N-linked (GlcNAc...) asparagine" evidence="1">
    <location>
        <position position="27"/>
    </location>
</feature>
<feature type="glycosylation site" description="N-linked (GlcNAc...) asparagine" evidence="1">
    <location>
        <position position="69"/>
    </location>
</feature>
<feature type="glycosylation site" description="N-linked (GlcNAc...) asparagine" evidence="1">
    <location>
        <position position="141"/>
    </location>
</feature>
<feature type="glycosylation site" description="N-linked (GlcNAc...) asparagine" evidence="1">
    <location>
        <position position="215"/>
    </location>
</feature>
<feature type="sequence conflict" description="In Ref. 1; AA sequence." evidence="8" ref="1">
    <original>N</original>
    <variation>D</variation>
    <location>
        <position position="27"/>
    </location>
</feature>
<feature type="sequence conflict" description="In Ref. 1; AA sequence." evidence="8" ref="1">
    <original>N</original>
    <variation>D</variation>
    <location>
        <position position="69"/>
    </location>
</feature>
<feature type="non-terminal residue" evidence="9">
    <location>
        <position position="1"/>
    </location>
</feature>
<sequence>AGPIASRQIVPNYPASSTSKGFHLVVNVTDPSADFTPSINNFYVNSIHVGAALNYVGVTAVPGRIFYQNGTAEEIRYAQSTVISDGATPPVPFGLSLRPDEGSDVVSTARLDAGPGTTGVRVSRFPEPYRFLQPETFLACNESLAYYQGDYFTVIKQADVTVGDDGSIDYNVPDNCISVRLIPECTELNELPEDAYASHEFAADTQCYDDVSALNWSEYGP</sequence>
<reference evidence="9" key="1">
    <citation type="journal article" date="2011" name="Int. Arch. Allergy Immunol.">
        <title>Characterization of human antigenic proteins SchS21 and SchS34 from Stachybotrys chartarum.</title>
        <authorList>
            <person name="Shi C."/>
            <person name="Smith M.L."/>
            <person name="Miller J.D."/>
        </authorList>
    </citation>
    <scope>NUCLEOTIDE SEQUENCE [MRNA]</scope>
    <scope>PROTEIN SEQUENCE OF 13-20; 21-34; 65-76; 103-110 AND 111-121</scope>
    <scope>ALLERGEN</scope>
    <source>
        <strain evidence="7">DAOM 235557</strain>
        <tissue evidence="7">Mycelium</tissue>
    </source>
</reference>
<reference key="2">
    <citation type="journal article" date="2008" name="J. Immunol. Methods">
        <title>Characterization of monoclonal antibodies to an antigenic protein from Stachybotrys chartarum and its measurement in house dust.</title>
        <authorList>
            <person name="Xu J."/>
            <person name="Liang Y."/>
            <person name="Belisle D."/>
            <person name="Miller J.D."/>
        </authorList>
    </citation>
    <scope>SUBCELLULAR LOCATION</scope>
    <scope>TISSUE SPECIFICITY</scope>
</reference>
<reference key="3">
    <citation type="journal article" date="2008" name="Mycopathologia">
        <title>Immunohistochemical and immunocytochemical detection of SchS34 antigen in Stachybotrys chartarum spores and spore impacted mouse lungs.</title>
        <authorList>
            <person name="Rand T.G."/>
            <person name="Miller J.D."/>
        </authorList>
    </citation>
    <scope>SUBCELLULAR LOCATION</scope>
</reference>
<name>SCH34_STACH</name>
<protein>
    <recommendedName>
        <fullName evidence="6 7">Antigenic protein SchS34</fullName>
    </recommendedName>
    <alternativeName>
        <fullName evidence="7">34 kDa secretory protein</fullName>
    </alternativeName>
    <alternativeName>
        <fullName evidence="5 6 7">SchS34</fullName>
    </alternativeName>
    <allergenName evidence="8">Sta c SchS34</allergenName>
</protein>
<dbReference type="EMBL" id="GQ258854">
    <property type="protein sequence ID" value="ACT37323.1"/>
    <property type="molecule type" value="mRNA"/>
</dbReference>
<dbReference type="Allergome" id="9072">
    <property type="allergen name" value="Sta c SchS34"/>
</dbReference>
<dbReference type="VEuPathDB" id="FungiDB:S40293_07183"/>
<dbReference type="GO" id="GO:0005737">
    <property type="term" value="C:cytoplasm"/>
    <property type="evidence" value="ECO:0000314"/>
    <property type="project" value="UniProtKB"/>
</dbReference>
<dbReference type="GO" id="GO:0005576">
    <property type="term" value="C:extracellular region"/>
    <property type="evidence" value="ECO:0000314"/>
    <property type="project" value="UniProtKB"/>
</dbReference>
<dbReference type="GO" id="GO:0031160">
    <property type="term" value="C:spore wall"/>
    <property type="evidence" value="ECO:0000314"/>
    <property type="project" value="UniProtKB"/>
</dbReference>
<dbReference type="GO" id="GO:0097736">
    <property type="term" value="P:aerial mycelium formation"/>
    <property type="evidence" value="ECO:0000270"/>
    <property type="project" value="UniProtKB"/>
</dbReference>
<dbReference type="InterPro" id="IPR057229">
    <property type="entry name" value="DUF7907"/>
</dbReference>
<dbReference type="Pfam" id="PF25484">
    <property type="entry name" value="DUF7907"/>
    <property type="match status" value="1"/>
</dbReference>
<organism evidence="9">
    <name type="scientific">Stachybotrys chartarum</name>
    <name type="common">Toxic black mold</name>
    <name type="synonym">Stilbospora chartarum</name>
    <dbReference type="NCBI Taxonomy" id="74722"/>
    <lineage>
        <taxon>Eukaryota</taxon>
        <taxon>Fungi</taxon>
        <taxon>Dikarya</taxon>
        <taxon>Ascomycota</taxon>
        <taxon>Pezizomycotina</taxon>
        <taxon>Sordariomycetes</taxon>
        <taxon>Hypocreomycetidae</taxon>
        <taxon>Hypocreales</taxon>
        <taxon>Stachybotryaceae</taxon>
        <taxon>Stachybotrys</taxon>
    </lineage>
</organism>
<comment type="subcellular location">
    <subcellularLocation>
        <location evidence="2 3">Secreted</location>
    </subcellularLocation>
    <subcellularLocation>
        <location evidence="2 3">Spore</location>
    </subcellularLocation>
    <subcellularLocation>
        <location evidence="2">Spore wall</location>
    </subcellularLocation>
    <subcellularLocation>
        <location evidence="2">Cytoplasm</location>
    </subcellularLocation>
    <text evidence="2">Localizes primarily in the outer and inner layers of the spore wall and on the external wall surfaces. In the mouse lung spreaded with spores, located in spore walls along the outside surface of the outer wall and in the intercellular space surrounding spores, slowly diffusing to the surrounding tissues of mouse granuloma.</text>
</comment>
<comment type="tissue specificity">
    <text evidence="3">Expressed in the mycelium (at protein level).</text>
</comment>
<comment type="allergen">
    <text evidence="4">Causes an allergic reaction in human. Natural and recombinant protein binds to IgE of patients allergic to toxic black mold fungus.</text>
</comment>
<proteinExistence type="evidence at protein level"/>
<evidence type="ECO:0000255" key="1">
    <source>
        <dbReference type="PROSITE-ProRule" id="PRU00498"/>
    </source>
</evidence>
<evidence type="ECO:0000269" key="2">
    <source>
    </source>
</evidence>
<evidence type="ECO:0000269" key="3">
    <source>
    </source>
</evidence>
<evidence type="ECO:0000269" key="4">
    <source>
    </source>
</evidence>
<evidence type="ECO:0000303" key="5">
    <source>
    </source>
</evidence>
<evidence type="ECO:0000303" key="6">
    <source>
    </source>
</evidence>
<evidence type="ECO:0000303" key="7">
    <source>
    </source>
</evidence>
<evidence type="ECO:0000305" key="8"/>
<evidence type="ECO:0000312" key="9">
    <source>
        <dbReference type="EMBL" id="ACT37323.1"/>
    </source>
</evidence>
<accession>C7E9V9</accession>